<reference key="1">
    <citation type="journal article" date="2006" name="Curr. Biol.">
        <title>The Arf6 GEF GEP100/BRAG2 regulates cell adhesion by controlling endocytosis of beta1 integrins.</title>
        <authorList>
            <person name="Dunphy J.L."/>
            <person name="Moravec R."/>
            <person name="Ly K."/>
            <person name="Lasell T.K."/>
            <person name="Melancon P."/>
            <person name="Casanova J.E."/>
        </authorList>
    </citation>
    <scope>NUCLEOTIDE SEQUENCE [MRNA] (ISOFORM 1)</scope>
    <scope>FUNCTION</scope>
</reference>
<reference key="2">
    <citation type="journal article" date="2006" name="Nature">
        <title>The DNA sequence, annotation and analysis of human chromosome 3.</title>
        <authorList>
            <person name="Muzny D.M."/>
            <person name="Scherer S.E."/>
            <person name="Kaul R."/>
            <person name="Wang J."/>
            <person name="Yu J."/>
            <person name="Sudbrak R."/>
            <person name="Buhay C.J."/>
            <person name="Chen R."/>
            <person name="Cree A."/>
            <person name="Ding Y."/>
            <person name="Dugan-Rocha S."/>
            <person name="Gill R."/>
            <person name="Gunaratne P."/>
            <person name="Harris R.A."/>
            <person name="Hawes A.C."/>
            <person name="Hernandez J."/>
            <person name="Hodgson A.V."/>
            <person name="Hume J."/>
            <person name="Jackson A."/>
            <person name="Khan Z.M."/>
            <person name="Kovar-Smith C."/>
            <person name="Lewis L.R."/>
            <person name="Lozado R.J."/>
            <person name="Metzker M.L."/>
            <person name="Milosavljevic A."/>
            <person name="Miner G.R."/>
            <person name="Morgan M.B."/>
            <person name="Nazareth L.V."/>
            <person name="Scott G."/>
            <person name="Sodergren E."/>
            <person name="Song X.-Z."/>
            <person name="Steffen D."/>
            <person name="Wei S."/>
            <person name="Wheeler D.A."/>
            <person name="Wright M.W."/>
            <person name="Worley K.C."/>
            <person name="Yuan Y."/>
            <person name="Zhang Z."/>
            <person name="Adams C.Q."/>
            <person name="Ansari-Lari M.A."/>
            <person name="Ayele M."/>
            <person name="Brown M.J."/>
            <person name="Chen G."/>
            <person name="Chen Z."/>
            <person name="Clendenning J."/>
            <person name="Clerc-Blankenburg K.P."/>
            <person name="Chen R."/>
            <person name="Chen Z."/>
            <person name="Davis C."/>
            <person name="Delgado O."/>
            <person name="Dinh H.H."/>
            <person name="Dong W."/>
            <person name="Draper H."/>
            <person name="Ernst S."/>
            <person name="Fu G."/>
            <person name="Gonzalez-Garay M.L."/>
            <person name="Garcia D.K."/>
            <person name="Gillett W."/>
            <person name="Gu J."/>
            <person name="Hao B."/>
            <person name="Haugen E."/>
            <person name="Havlak P."/>
            <person name="He X."/>
            <person name="Hennig S."/>
            <person name="Hu S."/>
            <person name="Huang W."/>
            <person name="Jackson L.R."/>
            <person name="Jacob L.S."/>
            <person name="Kelly S.H."/>
            <person name="Kube M."/>
            <person name="Levy R."/>
            <person name="Li Z."/>
            <person name="Liu B."/>
            <person name="Liu J."/>
            <person name="Liu W."/>
            <person name="Lu J."/>
            <person name="Maheshwari M."/>
            <person name="Nguyen B.-V."/>
            <person name="Okwuonu G.O."/>
            <person name="Palmeiri A."/>
            <person name="Pasternak S."/>
            <person name="Perez L.M."/>
            <person name="Phelps K.A."/>
            <person name="Plopper F.J."/>
            <person name="Qiang B."/>
            <person name="Raymond C."/>
            <person name="Rodriguez R."/>
            <person name="Saenphimmachak C."/>
            <person name="Santibanez J."/>
            <person name="Shen H."/>
            <person name="Shen Y."/>
            <person name="Subramanian S."/>
            <person name="Tabor P.E."/>
            <person name="Verduzco D."/>
            <person name="Waldron L."/>
            <person name="Wang J."/>
            <person name="Wang J."/>
            <person name="Wang Q."/>
            <person name="Williams G.A."/>
            <person name="Wong G.K.-S."/>
            <person name="Yao Z."/>
            <person name="Zhang J."/>
            <person name="Zhang X."/>
            <person name="Zhao G."/>
            <person name="Zhou J."/>
            <person name="Zhou Y."/>
            <person name="Nelson D."/>
            <person name="Lehrach H."/>
            <person name="Reinhardt R."/>
            <person name="Naylor S.L."/>
            <person name="Yang H."/>
            <person name="Olson M."/>
            <person name="Weinstock G."/>
            <person name="Gibbs R.A."/>
        </authorList>
    </citation>
    <scope>NUCLEOTIDE SEQUENCE [LARGE SCALE GENOMIC DNA]</scope>
</reference>
<reference key="3">
    <citation type="journal article" date="1998" name="DNA Res.">
        <title>Prediction of the coding sequences of unidentified human genes. XI. The complete sequences of 100 new cDNA clones from brain which code for large proteins in vitro.</title>
        <authorList>
            <person name="Nagase T."/>
            <person name="Ishikawa K."/>
            <person name="Suyama M."/>
            <person name="Kikuno R."/>
            <person name="Miyajima N."/>
            <person name="Tanaka A."/>
            <person name="Kotani H."/>
            <person name="Nomura N."/>
            <person name="Ohara O."/>
        </authorList>
    </citation>
    <scope>NUCLEOTIDE SEQUENCE [LARGE SCALE MRNA] (ISOFORM 2)</scope>
    <scope>TISSUE SPECIFICITY</scope>
    <source>
        <tissue>Brain</tissue>
    </source>
</reference>
<reference key="4">
    <citation type="journal article" date="2004" name="Genome Res.">
        <title>The status, quality, and expansion of the NIH full-length cDNA project: the Mammalian Gene Collection (MGC).</title>
        <authorList>
            <consortium name="The MGC Project Team"/>
        </authorList>
    </citation>
    <scope>NUCLEOTIDE SEQUENCE [LARGE SCALE MRNA] OF 1-936 (ISOFORM 2)</scope>
    <source>
        <tissue>Placenta</tissue>
    </source>
</reference>
<reference key="5">
    <citation type="journal article" date="2001" name="Proc. Natl. Acad. Sci. U.S.A.">
        <title>ARF-GEP(100), a guanine nucleotide-exchange protein for ADP-ribosylation factor 6.</title>
        <authorList>
            <person name="Someya A."/>
            <person name="Sata M."/>
            <person name="Takeda K."/>
            <person name="Pacheco-Rodriguez G."/>
            <person name="Ferrans V.J."/>
            <person name="Moss J."/>
            <person name="Vaughan M."/>
        </authorList>
    </citation>
    <scope>TISSUE SPECIFICITY</scope>
    <scope>SUBCELLULAR LOCATION</scope>
    <scope>FUNCTION</scope>
    <scope>INTERACTION WITH ARF6</scope>
</reference>
<reference key="6">
    <citation type="journal article" date="2008" name="Proc. Natl. Acad. Sci. U.S.A.">
        <title>A quantitative atlas of mitotic phosphorylation.</title>
        <authorList>
            <person name="Dephoure N."/>
            <person name="Zhou C."/>
            <person name="Villen J."/>
            <person name="Beausoleil S.A."/>
            <person name="Bakalarski C.E."/>
            <person name="Elledge S.J."/>
            <person name="Gygi S.P."/>
        </authorList>
    </citation>
    <scope>PHOSPHORYLATION [LARGE SCALE ANALYSIS] AT SER-512</scope>
    <scope>IDENTIFICATION BY MASS SPECTROMETRY [LARGE SCALE ANALYSIS]</scope>
    <source>
        <tissue>Cervix carcinoma</tissue>
    </source>
</reference>
<reference key="7">
    <citation type="journal article" date="2009" name="Sci. Signal.">
        <title>Quantitative phosphoproteomic analysis of T cell receptor signaling reveals system-wide modulation of protein-protein interactions.</title>
        <authorList>
            <person name="Mayya V."/>
            <person name="Lundgren D.H."/>
            <person name="Hwang S.-I."/>
            <person name="Rezaul K."/>
            <person name="Wu L."/>
            <person name="Eng J.K."/>
            <person name="Rodionov V."/>
            <person name="Han D.K."/>
        </authorList>
    </citation>
    <scope>IDENTIFICATION BY MASS SPECTROMETRY [LARGE SCALE ANALYSIS]</scope>
    <source>
        <tissue>Leukemic T-cell</tissue>
    </source>
</reference>
<reference key="8">
    <citation type="journal article" date="2011" name="BMC Syst. Biol.">
        <title>Initial characterization of the human central proteome.</title>
        <authorList>
            <person name="Burkard T.R."/>
            <person name="Planyavsky M."/>
            <person name="Kaupe I."/>
            <person name="Breitwieser F.P."/>
            <person name="Buerckstuemmer T."/>
            <person name="Bennett K.L."/>
            <person name="Superti-Furga G."/>
            <person name="Colinge J."/>
        </authorList>
    </citation>
    <scope>IDENTIFICATION BY MASS SPECTROMETRY [LARGE SCALE ANALYSIS]</scope>
</reference>
<reference key="9">
    <citation type="journal article" date="2011" name="Sci. Signal.">
        <title>System-wide temporal characterization of the proteome and phosphoproteome of human embryonic stem cell differentiation.</title>
        <authorList>
            <person name="Rigbolt K.T."/>
            <person name="Prokhorova T.A."/>
            <person name="Akimov V."/>
            <person name="Henningsen J."/>
            <person name="Johansen P.T."/>
            <person name="Kratchmarova I."/>
            <person name="Kassem M."/>
            <person name="Mann M."/>
            <person name="Olsen J.V."/>
            <person name="Blagoev B."/>
        </authorList>
    </citation>
    <scope>PHOSPHORYLATION [LARGE SCALE ANALYSIS] AT SER-180 AND SER-512</scope>
    <scope>IDENTIFICATION BY MASS SPECTROMETRY [LARGE SCALE ANALYSIS]</scope>
</reference>
<reference key="10">
    <citation type="journal article" date="2013" name="J. Proteome Res.">
        <title>Toward a comprehensive characterization of a human cancer cell phosphoproteome.</title>
        <authorList>
            <person name="Zhou H."/>
            <person name="Di Palma S."/>
            <person name="Preisinger C."/>
            <person name="Peng M."/>
            <person name="Polat A.N."/>
            <person name="Heck A.J."/>
            <person name="Mohammed S."/>
        </authorList>
    </citation>
    <scope>PHOSPHORYLATION [LARGE SCALE ANALYSIS] AT SER-89; SER-105; SER-107; SER-180; SER-512; SER-515; SER-892 AND SER-925</scope>
    <scope>IDENTIFICATION BY MASS SPECTROMETRY [LARGE SCALE ANALYSIS]</scope>
    <source>
        <tissue>Cervix carcinoma</tissue>
        <tissue>Erythroleukemia</tissue>
    </source>
</reference>
<reference key="11">
    <citation type="journal article" date="2014" name="J. Proteomics">
        <title>An enzyme assisted RP-RPLC approach for in-depth analysis of human liver phosphoproteome.</title>
        <authorList>
            <person name="Bian Y."/>
            <person name="Song C."/>
            <person name="Cheng K."/>
            <person name="Dong M."/>
            <person name="Wang F."/>
            <person name="Huang J."/>
            <person name="Sun D."/>
            <person name="Wang L."/>
            <person name="Ye M."/>
            <person name="Zou H."/>
        </authorList>
    </citation>
    <scope>PHOSPHORYLATION [LARGE SCALE ANALYSIS] AT SER-180; SER-253; SER-512; TYR-911; SER-924 AND SER-925</scope>
    <scope>IDENTIFICATION BY MASS SPECTROMETRY [LARGE SCALE ANALYSIS]</scope>
    <source>
        <tissue>Liver</tissue>
    </source>
</reference>
<reference evidence="20" key="12">
    <citation type="submission" date="2011-02" db="PDB data bank">
        <title>Crystal Structure of GEP100, the plextrin homology domain of IQ motif and SEC7 domain-containing protein 1 isoform a.</title>
        <authorList>
            <consortium name="Structural genomics consortium (SGC)"/>
        </authorList>
    </citation>
    <scope>X-RAY CRYSTALLOGRAPHY (2.39 ANGSTROMS) OF 743-880</scope>
</reference>
<reference evidence="21" key="13">
    <citation type="journal article" date="2013" name="PLoS Biol.">
        <title>Integrated conformational and lipid-sensing regulation of endosomal ArfGEF BRAG2.</title>
        <authorList>
            <person name="Aizel K."/>
            <person name="Biou V."/>
            <person name="Navaza J."/>
            <person name="Duarte L.V."/>
            <person name="Campanacci V."/>
            <person name="Cherfils J."/>
            <person name="Zeghouf M."/>
        </authorList>
    </citation>
    <scope>X-RAY CRYSTALLOGRAPHY (3.30 ANGSTROMS) OF 512-885 OF MUTANT LYS-620 IN COMPLEX WITH ARF1</scope>
    <scope>INTERACTION WITH ARF1</scope>
    <scope>FUNCTION</scope>
    <scope>MUTAGENESIS OF GLU-620</scope>
    <scope>DOMAIN</scope>
</reference>
<reference key="14">
    <citation type="journal article" date="2019" name="Am. J. Hum. Genet.">
        <title>Bi-allelic Variants in IQSEC1 Cause Intellectual Disability, Developmental Delay, and Short Stature.</title>
        <authorList>
            <person name="Ansar M."/>
            <person name="Chung H.L."/>
            <person name="Al-Otaibi A."/>
            <person name="Elagabani M.N."/>
            <person name="Ravenscroft T.A."/>
            <person name="Paracha S.A."/>
            <person name="Scholz R."/>
            <person name="Abdel Magid T."/>
            <person name="Sarwar M.T."/>
            <person name="Shah S.F."/>
            <person name="Qaisar A.A."/>
            <person name="Makrythanasis P."/>
            <person name="Marcogliese P.C."/>
            <person name="Kamsteeg E.J."/>
            <person name="Falconnet E."/>
            <person name="Ranza E."/>
            <person name="Santoni F.A."/>
            <person name="Aldhalaan H."/>
            <person name="Al-Asmari A."/>
            <person name="Faqeih E.A."/>
            <person name="Ahmed J."/>
            <person name="Kornau H.C."/>
            <person name="Bellen H.J."/>
            <person name="Antonarakis S.E."/>
        </authorList>
    </citation>
    <scope>INVOLVEMENT IN IDDSSBA</scope>
    <scope>VARIANTS IDDSSBA GLN-335 AND MET-357</scope>
    <scope>CHARACTERIZATION OF VARIANTS IDDSSBA GLN-335 AND MET-357</scope>
    <scope>FUNCTION</scope>
</reference>
<proteinExistence type="evidence at protein level"/>
<gene>
    <name evidence="19" type="primary">IQSEC1</name>
    <name type="synonym">ARFGEP100</name>
    <name evidence="15" type="synonym">BRAG2</name>
    <name type="synonym">KIAA0763</name>
</gene>
<evidence type="ECO:0000250" key="1">
    <source>
        <dbReference type="UniProtKB" id="A0A0G2JUG7"/>
    </source>
</evidence>
<evidence type="ECO:0000250" key="2">
    <source>
        <dbReference type="UniProtKB" id="Q8R0S2"/>
    </source>
</evidence>
<evidence type="ECO:0000255" key="3"/>
<evidence type="ECO:0000255" key="4">
    <source>
        <dbReference type="PROSITE-ProRule" id="PRU00116"/>
    </source>
</evidence>
<evidence type="ECO:0000255" key="5">
    <source>
        <dbReference type="PROSITE-ProRule" id="PRU00189"/>
    </source>
</evidence>
<evidence type="ECO:0000256" key="6">
    <source>
        <dbReference type="SAM" id="MobiDB-lite"/>
    </source>
</evidence>
<evidence type="ECO:0000269" key="7">
    <source>
    </source>
</evidence>
<evidence type="ECO:0000269" key="8">
    <source>
    </source>
</evidence>
<evidence type="ECO:0000269" key="9">
    <source>
    </source>
</evidence>
<evidence type="ECO:0000269" key="10">
    <source>
    </source>
</evidence>
<evidence type="ECO:0000269" key="11">
    <source>
    </source>
</evidence>
<evidence type="ECO:0000303" key="12">
    <source>
    </source>
</evidence>
<evidence type="ECO:0000303" key="13">
    <source>
    </source>
</evidence>
<evidence type="ECO:0000303" key="14">
    <source>
    </source>
</evidence>
<evidence type="ECO:0000303" key="15">
    <source>
    </source>
</evidence>
<evidence type="ECO:0000303" key="16">
    <source>
    </source>
</evidence>
<evidence type="ECO:0000305" key="17"/>
<evidence type="ECO:0000305" key="18">
    <source>
    </source>
</evidence>
<evidence type="ECO:0000312" key="19">
    <source>
        <dbReference type="HGNC" id="HGNC:29112"/>
    </source>
</evidence>
<evidence type="ECO:0007744" key="20">
    <source>
        <dbReference type="PDB" id="3QWM"/>
    </source>
</evidence>
<evidence type="ECO:0007744" key="21">
    <source>
        <dbReference type="PDB" id="4C0A"/>
    </source>
</evidence>
<evidence type="ECO:0007744" key="22">
    <source>
    </source>
</evidence>
<evidence type="ECO:0007744" key="23">
    <source>
    </source>
</evidence>
<evidence type="ECO:0007744" key="24">
    <source>
    </source>
</evidence>
<evidence type="ECO:0007744" key="25">
    <source>
    </source>
</evidence>
<evidence type="ECO:0007829" key="26">
    <source>
        <dbReference type="PDB" id="4C0A"/>
    </source>
</evidence>
<evidence type="ECO:0007829" key="27">
    <source>
        <dbReference type="PDB" id="5NLV"/>
    </source>
</evidence>
<evidence type="ECO:0007829" key="28">
    <source>
        <dbReference type="PDB" id="5NLY"/>
    </source>
</evidence>
<evidence type="ECO:0007829" key="29">
    <source>
        <dbReference type="PDB" id="7VMB"/>
    </source>
</evidence>
<protein>
    <recommendedName>
        <fullName evidence="17">IQ motif and SEC7 domain-containing protein 1</fullName>
    </recommendedName>
    <alternativeName>
        <fullName>ADP-ribosylation factors guanine nucleotide-exchange protein 100</fullName>
    </alternativeName>
    <alternativeName>
        <fullName>ADP-ribosylation factors guanine nucleotide-exchange protein 2</fullName>
    </alternativeName>
    <alternativeName>
        <fullName evidence="13">Brefeldin-resistant Arf-GEF 2 protein</fullName>
        <shortName evidence="14 15">BRAG2</shortName>
    </alternativeName>
</protein>
<organism>
    <name type="scientific">Homo sapiens</name>
    <name type="common">Human</name>
    <dbReference type="NCBI Taxonomy" id="9606"/>
    <lineage>
        <taxon>Eukaryota</taxon>
        <taxon>Metazoa</taxon>
        <taxon>Chordata</taxon>
        <taxon>Craniata</taxon>
        <taxon>Vertebrata</taxon>
        <taxon>Euteleostomi</taxon>
        <taxon>Mammalia</taxon>
        <taxon>Eutheria</taxon>
        <taxon>Euarchontoglires</taxon>
        <taxon>Primates</taxon>
        <taxon>Haplorrhini</taxon>
        <taxon>Catarrhini</taxon>
        <taxon>Hominidae</taxon>
        <taxon>Homo</taxon>
    </lineage>
</organism>
<accession>Q6DN90</accession>
<accession>A0A087WWK8</accession>
<accession>O94863</accession>
<accession>Q96D85</accession>
<comment type="function">
    <text evidence="1 7 8 9 18">Guanine nucleotide exchange factor for ARF1 and ARF6 (PubMed:11226253, PubMed:24058294). Guanine nucleotide exchange factor activity is enhanced by lipid binding (PubMed:24058294). Accelerates GTP binding by ARFs of all three classes. Guanine nucleotide exchange protein for ARF6, mediating internalization of beta-1 integrin (PubMed:16461286). Involved in neuronal development (Probable). In neurons, plays a role in the control of vesicle formation by endocytoc cargo. Upon long term depression, interacts with GRIA2 and mediates the activation of ARF6 to internalize synaptic AMPAR receptors (By similarity).</text>
</comment>
<comment type="subunit">
    <text evidence="1 7 9">Interacts with ARF1 and ARF6. Interacts with GRIA2; the interaction is required for ARF6 activation (By similarity).</text>
</comment>
<comment type="interaction">
    <interactant intactId="EBI-3044091">
        <id>Q6DN90</id>
    </interactant>
    <interactant intactId="EBI-3909604">
        <id>P50148</id>
        <label>GNAQ</label>
    </interactant>
    <organismsDiffer>false</organismsDiffer>
    <experiments>2</experiments>
</comment>
<comment type="interaction">
    <interactant intactId="EBI-21911304">
        <id>Q6DN90-2</id>
    </interactant>
    <interactant intactId="EBI-640741">
        <id>P01023</id>
        <label>A2M</label>
    </interactant>
    <organismsDiffer>false</organismsDiffer>
    <experiments>3</experiments>
</comment>
<comment type="interaction">
    <interactant intactId="EBI-21911304">
        <id>Q6DN90-2</id>
    </interactant>
    <interactant intactId="EBI-25928834">
        <id>A0A0S2Z5Q7</id>
        <label>ALS2</label>
    </interactant>
    <organismsDiffer>false</organismsDiffer>
    <experiments>3</experiments>
</comment>
<comment type="interaction">
    <interactant intactId="EBI-21911304">
        <id>Q6DN90-2</id>
    </interactant>
    <interactant intactId="EBI-21535880">
        <id>Q92870-2</id>
        <label>APBB2</label>
    </interactant>
    <organismsDiffer>false</organismsDiffer>
    <experiments>3</experiments>
</comment>
<comment type="interaction">
    <interactant intactId="EBI-21911304">
        <id>Q6DN90-2</id>
    </interactant>
    <interactant intactId="EBI-77613">
        <id>P05067</id>
        <label>APP</label>
    </interactant>
    <organismsDiffer>false</organismsDiffer>
    <experiments>3</experiments>
</comment>
<comment type="interaction">
    <interactant intactId="EBI-21911304">
        <id>Q6DN90-2</id>
    </interactant>
    <interactant intactId="EBI-17264467">
        <id>P05067-2</id>
        <label>APP</label>
    </interactant>
    <organismsDiffer>false</organismsDiffer>
    <experiments>3</experiments>
</comment>
<comment type="interaction">
    <interactant intactId="EBI-21911304">
        <id>Q6DN90-2</id>
    </interactant>
    <interactant intactId="EBI-930964">
        <id>P54253</id>
        <label>ATXN1</label>
    </interactant>
    <organismsDiffer>false</organismsDiffer>
    <experiments>6</experiments>
</comment>
<comment type="interaction">
    <interactant intactId="EBI-21911304">
        <id>Q6DN90-2</id>
    </interactant>
    <interactant intactId="EBI-25840379">
        <id>Q14203-5</id>
        <label>DCTN1</label>
    </interactant>
    <organismsDiffer>false</organismsDiffer>
    <experiments>3</experiments>
</comment>
<comment type="interaction">
    <interactant intactId="EBI-21911304">
        <id>Q6DN90-2</id>
    </interactant>
    <interactant intactId="EBI-10968534">
        <id>P50570-2</id>
        <label>DNM2</label>
    </interactant>
    <organismsDiffer>false</organismsDiffer>
    <experiments>3</experiments>
</comment>
<comment type="interaction">
    <interactant intactId="EBI-21911304">
        <id>Q6DN90-2</id>
    </interactant>
    <interactant intactId="EBI-11110431">
        <id>Q8TB36</id>
        <label>GDAP1</label>
    </interactant>
    <organismsDiffer>false</organismsDiffer>
    <experiments>3</experiments>
</comment>
<comment type="interaction">
    <interactant intactId="EBI-21911304">
        <id>Q6DN90-2</id>
    </interactant>
    <interactant intactId="EBI-466029">
        <id>P42858</id>
        <label>HTT</label>
    </interactant>
    <organismsDiffer>false</organismsDiffer>
    <experiments>18</experiments>
</comment>
<comment type="interaction">
    <interactant intactId="EBI-21911304">
        <id>Q6DN90-2</id>
    </interactant>
    <interactant intactId="EBI-1189067">
        <id>P51608</id>
        <label>MECP2</label>
    </interactant>
    <organismsDiffer>false</organismsDiffer>
    <experiments>3</experiments>
</comment>
<comment type="interaction">
    <interactant intactId="EBI-21911304">
        <id>Q6DN90-2</id>
    </interactant>
    <interactant intactId="EBI-1164361">
        <id>Q99497</id>
        <label>PARK7</label>
    </interactant>
    <organismsDiffer>false</organismsDiffer>
    <experiments>3</experiments>
</comment>
<comment type="interaction">
    <interactant intactId="EBI-21911304">
        <id>Q6DN90-2</id>
    </interactant>
    <interactant intactId="EBI-752057">
        <id>Q7Z412</id>
        <label>PEX26</label>
    </interactant>
    <organismsDiffer>false</organismsDiffer>
    <experiments>3</experiments>
</comment>
<comment type="interaction">
    <interactant intactId="EBI-21911304">
        <id>Q6DN90-2</id>
    </interactant>
    <interactant intactId="EBI-2846068">
        <id>Q9BXM7</id>
        <label>PINK1</label>
    </interactant>
    <organismsDiffer>false</organismsDiffer>
    <experiments>3</experiments>
</comment>
<comment type="interaction">
    <interactant intactId="EBI-21911304">
        <id>Q6DN90-2</id>
    </interactant>
    <interactant intactId="EBI-50433196">
        <id>A0A6Q8PF08</id>
        <label>PMP22</label>
    </interactant>
    <organismsDiffer>false</organismsDiffer>
    <experiments>3</experiments>
</comment>
<comment type="interaction">
    <interactant intactId="EBI-21911304">
        <id>Q6DN90-2</id>
    </interactant>
    <interactant intactId="EBI-21251460">
        <id>O60260-5</id>
        <label>PRKN</label>
    </interactant>
    <organismsDiffer>false</organismsDiffer>
    <experiments>6</experiments>
</comment>
<comment type="interaction">
    <interactant intactId="EBI-21911304">
        <id>Q6DN90-2</id>
    </interactant>
    <interactant intactId="EBI-11047108">
        <id>P49768-2</id>
        <label>PSEN1</label>
    </interactant>
    <organismsDiffer>false</organismsDiffer>
    <experiments>6</experiments>
</comment>
<comment type="interaction">
    <interactant intactId="EBI-21911304">
        <id>Q6DN90-2</id>
    </interactant>
    <interactant intactId="EBI-395421">
        <id>Q16637</id>
        <label>SMN2</label>
    </interactant>
    <organismsDiffer>false</organismsDiffer>
    <experiments>3</experiments>
</comment>
<comment type="interaction">
    <interactant intactId="EBI-21911304">
        <id>Q6DN90-2</id>
    </interactant>
    <interactant intactId="EBI-985879">
        <id>P37840</id>
        <label>SNCA</label>
    </interactant>
    <organismsDiffer>false</organismsDiffer>
    <experiments>3</experiments>
</comment>
<comment type="interaction">
    <interactant intactId="EBI-21911304">
        <id>Q6DN90-2</id>
    </interactant>
    <interactant intactId="EBI-990792">
        <id>P00441</id>
        <label>SOD1</label>
    </interactant>
    <organismsDiffer>false</organismsDiffer>
    <experiments>3</experiments>
</comment>
<comment type="interaction">
    <interactant intactId="EBI-21911304">
        <id>Q6DN90-2</id>
    </interactant>
    <interactant intactId="EBI-372899">
        <id>Q13148</id>
        <label>TARDBP</label>
    </interactant>
    <organismsDiffer>false</organismsDiffer>
    <experiments>6</experiments>
</comment>
<comment type="interaction">
    <interactant intactId="EBI-21911304">
        <id>Q6DN90-2</id>
    </interactant>
    <interactant intactId="EBI-25847109">
        <id>O14656-2</id>
        <label>TOR1A</label>
    </interactant>
    <organismsDiffer>false</organismsDiffer>
    <experiments>3</experiments>
</comment>
<comment type="interaction">
    <interactant intactId="EBI-21911304">
        <id>Q6DN90-2</id>
    </interactant>
    <interactant intactId="EBI-714860">
        <id>P09936</id>
        <label>UCHL1</label>
    </interactant>
    <organismsDiffer>false</organismsDiffer>
    <experiments>3</experiments>
</comment>
<comment type="subcellular location">
    <subcellularLocation>
        <location evidence="7">Cytoplasm</location>
    </subcellularLocation>
    <subcellularLocation>
        <location evidence="7">Nucleus</location>
    </subcellularLocation>
    <subcellularLocation>
        <location evidence="2">Postsynaptic density</location>
    </subcellularLocation>
    <subcellularLocation>
        <location evidence="2">Cytoplasmic vesicle</location>
        <location evidence="2">Secretory vesicle</location>
        <location evidence="2">Synaptic vesicle</location>
    </subcellularLocation>
    <text>At steady state, may be preferentially cytosolic.</text>
</comment>
<comment type="alternative products">
    <event type="alternative splicing"/>
    <isoform>
        <id>Q6DN90-1</id>
        <name>1</name>
        <name>BRAG2b</name>
        <sequence type="displayed"/>
    </isoform>
    <isoform>
        <id>Q6DN90-2</id>
        <name>2</name>
        <name>BRAG2a</name>
        <sequence type="described" ref="VSP_019758"/>
    </isoform>
    <isoform>
        <id>Q6DN90-3</id>
        <name>3</name>
        <sequence type="described" ref="VSP_060581 VSP_060582"/>
    </isoform>
</comment>
<comment type="tissue specificity">
    <text evidence="7 11">Expressed in brain, ovary, heart, lung, liver, kidney and leukocytes. Moderate expression was also detected in lung, skeletal muscle, placenta, small intestine, pancreas, spleen and testis.</text>
</comment>
<comment type="domain">
    <text evidence="9">The PH domain mediates interaction with lipid membranes that contain phosphatidylinositol-4,5-bisphosphate, but does not bind membranes that lack phosphatidylinositol-4,5-bisphosphate.</text>
</comment>
<comment type="disease" evidence="10">
    <disease id="DI-05712">
        <name>Intellectual developmental disorder with short stature and behavioral abnormalities</name>
        <acronym>IDDSSBA</acronym>
        <description>An autosomal recessive disorder with onset in infancy and characterized by intellectual disability, developmental delay, short stature, aphasia, and hypotonia. Additional features include seizures and behavioral abnormalities, such as inattention, hyperactivity and aggression.</description>
        <dbReference type="MIM" id="618687"/>
    </disease>
    <text>The disease is caused by variants affecting the gene represented in this entry.</text>
</comment>
<comment type="similarity">
    <text evidence="17">Belongs to the BRAG family.</text>
</comment>
<feature type="chain" id="PRO_0000245606" description="IQ motif and SEC7 domain-containing protein 1">
    <location>
        <begin position="1"/>
        <end position="963"/>
    </location>
</feature>
<feature type="domain" description="IQ" evidence="4">
    <location>
        <begin position="134"/>
        <end position="163"/>
    </location>
</feature>
<feature type="domain" description="SEC7" evidence="5">
    <location>
        <begin position="517"/>
        <end position="710"/>
    </location>
</feature>
<feature type="domain" description="PH">
    <location>
        <begin position="774"/>
        <end position="866"/>
    </location>
</feature>
<feature type="region of interest" description="Disordered" evidence="6">
    <location>
        <begin position="21"/>
        <end position="88"/>
    </location>
</feature>
<feature type="region of interest" description="Disordered" evidence="6">
    <location>
        <begin position="312"/>
        <end position="332"/>
    </location>
</feature>
<feature type="region of interest" description="Disordered" evidence="6">
    <location>
        <begin position="349"/>
        <end position="513"/>
    </location>
</feature>
<feature type="region of interest" description="Disordered" evidence="6">
    <location>
        <begin position="922"/>
        <end position="947"/>
    </location>
</feature>
<feature type="coiled-coil region" evidence="3">
    <location>
        <begin position="848"/>
        <end position="879"/>
    </location>
</feature>
<feature type="compositionally biased region" description="Polar residues" evidence="6">
    <location>
        <begin position="29"/>
        <end position="38"/>
    </location>
</feature>
<feature type="compositionally biased region" description="Basic and acidic residues" evidence="6">
    <location>
        <begin position="366"/>
        <end position="376"/>
    </location>
</feature>
<feature type="compositionally biased region" description="Basic and acidic residues" evidence="6">
    <location>
        <begin position="430"/>
        <end position="446"/>
    </location>
</feature>
<feature type="compositionally biased region" description="Low complexity" evidence="6">
    <location>
        <begin position="471"/>
        <end position="489"/>
    </location>
</feature>
<feature type="modified residue" description="Phosphoserine" evidence="24">
    <location>
        <position position="89"/>
    </location>
</feature>
<feature type="modified residue" description="Phosphoserine" evidence="24">
    <location>
        <position position="105"/>
    </location>
</feature>
<feature type="modified residue" description="Phosphoserine" evidence="24">
    <location>
        <position position="107"/>
    </location>
</feature>
<feature type="modified residue" description="Phosphoserine" evidence="23 24 25">
    <location>
        <position position="180"/>
    </location>
</feature>
<feature type="modified residue" description="Phosphoserine" evidence="2">
    <location>
        <position position="249"/>
    </location>
</feature>
<feature type="modified residue" description="Phosphoserine" evidence="25">
    <location>
        <position position="253"/>
    </location>
</feature>
<feature type="modified residue" description="Phosphoserine" evidence="22 23 24 25">
    <location>
        <position position="512"/>
    </location>
</feature>
<feature type="modified residue" description="Phosphoserine" evidence="24">
    <location>
        <position position="515"/>
    </location>
</feature>
<feature type="modified residue" description="Phosphoserine" evidence="24">
    <location>
        <position position="892"/>
    </location>
</feature>
<feature type="modified residue" description="Phosphotyrosine" evidence="25">
    <location>
        <position position="911"/>
    </location>
</feature>
<feature type="modified residue" description="Phosphoserine" evidence="25">
    <location>
        <position position="924"/>
    </location>
</feature>
<feature type="modified residue" description="Phosphoserine" evidence="24 25">
    <location>
        <position position="925"/>
    </location>
</feature>
<feature type="splice variant" id="VSP_019758" description="In isoform 2." evidence="12 16">
    <location>
        <begin position="1"/>
        <end position="122"/>
    </location>
</feature>
<feature type="splice variant" id="VSP_060581" description="In isoform 3.">
    <original>MWCLHCNSERTQSLLELELDSG</original>
    <variation>MACRRRYF</variation>
    <location>
        <begin position="1"/>
        <end position="22"/>
    </location>
</feature>
<feature type="splice variant" id="VSP_060582" description="In isoform 3.">
    <original>FQPFEPLQPSVLCS</original>
    <variation>GSIISSPHMRRRATSTRECPSRPHQTMPNSSSLLGSLFGSKRGKPPPQAHLPSAPALPPPHPPVVLPHLQHSVAGHHLGPPEGLPQAAMHGHHTQYCHMQNPPPYHHHHHHHPPQHIQHAHQYHHGPHGGHPAYGAHAHGHPPLPSAHVGHTVHHHGQPPAPPPPTSSKAKPSGISTIV</variation>
    <location>
        <begin position="950"/>
        <end position="963"/>
    </location>
</feature>
<feature type="sequence variant" id="VAR_083480" description="In IDDSSBA; loss of function; dbSNP:rs758170522." evidence="10">
    <original>R</original>
    <variation>Q</variation>
    <location>
        <position position="335"/>
    </location>
</feature>
<feature type="sequence variant" id="VAR_083481" description="In IDDSSBA; loss of function; dbSNP:rs765723607." evidence="10">
    <original>T</original>
    <variation>M</variation>
    <location>
        <position position="357"/>
    </location>
</feature>
<feature type="sequence variant" id="VAR_051927" description="In dbSNP:rs35319679.">
    <original>P</original>
    <variation>S</variation>
    <location>
        <position position="640"/>
    </location>
</feature>
<feature type="sequence variant" id="VAR_027004" description="In dbSNP:rs17541405.">
    <original>V</original>
    <variation>I</variation>
    <location>
        <position position="882"/>
    </location>
</feature>
<feature type="mutagenesis site" description="Abolishes guanosine nucleotide exchange factor activity." evidence="9">
    <original>E</original>
    <variation>K</variation>
    <location>
        <position position="620"/>
    </location>
</feature>
<feature type="sequence conflict" description="In Ref. 4." evidence="17" ref="4">
    <original>KRG</original>
    <variation>VHH</variation>
    <location>
        <begin position="934"/>
        <end position="936"/>
    </location>
</feature>
<feature type="helix" evidence="29">
    <location>
        <begin position="114"/>
        <end position="127"/>
    </location>
</feature>
<feature type="helix" evidence="29">
    <location>
        <begin position="131"/>
        <end position="158"/>
    </location>
</feature>
<feature type="helix" evidence="27">
    <location>
        <begin position="516"/>
        <end position="518"/>
    </location>
</feature>
<feature type="helix" evidence="29">
    <location>
        <begin position="522"/>
        <end position="537"/>
    </location>
</feature>
<feature type="helix" evidence="29">
    <location>
        <begin position="539"/>
        <end position="548"/>
    </location>
</feature>
<feature type="helix" evidence="29">
    <location>
        <begin position="556"/>
        <end position="565"/>
    </location>
</feature>
<feature type="helix" evidence="29">
    <location>
        <begin position="571"/>
        <end position="578"/>
    </location>
</feature>
<feature type="helix" evidence="29">
    <location>
        <begin position="584"/>
        <end position="595"/>
    </location>
</feature>
<feature type="helix" evidence="29">
    <location>
        <begin position="604"/>
        <end position="614"/>
    </location>
</feature>
<feature type="helix" evidence="29">
    <location>
        <begin position="621"/>
        <end position="638"/>
    </location>
</feature>
<feature type="helix" evidence="29">
    <location>
        <begin position="640"/>
        <end position="644"/>
    </location>
</feature>
<feature type="strand" evidence="28">
    <location>
        <begin position="646"/>
        <end position="648"/>
    </location>
</feature>
<feature type="helix" evidence="29">
    <location>
        <begin position="650"/>
        <end position="667"/>
    </location>
</feature>
<feature type="turn" evidence="26">
    <location>
        <begin position="669"/>
        <end position="671"/>
    </location>
</feature>
<feature type="helix" evidence="29">
    <location>
        <begin position="673"/>
        <end position="675"/>
    </location>
</feature>
<feature type="helix" evidence="29">
    <location>
        <begin position="679"/>
        <end position="685"/>
    </location>
</feature>
<feature type="turn" evidence="29">
    <location>
        <begin position="686"/>
        <end position="689"/>
    </location>
</feature>
<feature type="helix" evidence="29">
    <location>
        <begin position="697"/>
        <end position="709"/>
    </location>
</feature>
<feature type="helix" evidence="29">
    <location>
        <begin position="718"/>
        <end position="730"/>
    </location>
</feature>
<feature type="strand" evidence="29">
    <location>
        <begin position="753"/>
        <end position="761"/>
    </location>
</feature>
<feature type="turn" evidence="29">
    <location>
        <begin position="771"/>
        <end position="774"/>
    </location>
</feature>
<feature type="strand" evidence="29">
    <location>
        <begin position="775"/>
        <end position="781"/>
    </location>
</feature>
<feature type="strand" evidence="29">
    <location>
        <begin position="784"/>
        <end position="793"/>
    </location>
</feature>
<feature type="strand" evidence="29">
    <location>
        <begin position="798"/>
        <end position="807"/>
    </location>
</feature>
<feature type="strand" evidence="29">
    <location>
        <begin position="811"/>
        <end position="816"/>
    </location>
</feature>
<feature type="strand" evidence="29">
    <location>
        <begin position="824"/>
        <end position="830"/>
    </location>
</feature>
<feature type="strand" evidence="28">
    <location>
        <begin position="832"/>
        <end position="834"/>
    </location>
</feature>
<feature type="strand" evidence="29">
    <location>
        <begin position="836"/>
        <end position="843"/>
    </location>
</feature>
<feature type="helix" evidence="29">
    <location>
        <begin position="847"/>
        <end position="875"/>
    </location>
</feature>
<keyword id="KW-0002">3D-structure</keyword>
<keyword id="KW-0025">Alternative splicing</keyword>
<keyword id="KW-0175">Coiled coil</keyword>
<keyword id="KW-0963">Cytoplasm</keyword>
<keyword id="KW-0968">Cytoplasmic vesicle</keyword>
<keyword id="KW-0242">Dwarfism</keyword>
<keyword id="KW-0344">Guanine-nucleotide releasing factor</keyword>
<keyword id="KW-0991">Intellectual disability</keyword>
<keyword id="KW-0446">Lipid-binding</keyword>
<keyword id="KW-0539">Nucleus</keyword>
<keyword id="KW-0597">Phosphoprotein</keyword>
<keyword id="KW-1267">Proteomics identification</keyword>
<keyword id="KW-1185">Reference proteome</keyword>
<keyword id="KW-0770">Synapse</keyword>
<dbReference type="EMBL" id="AY653734">
    <property type="protein sequence ID" value="AAT72063.1"/>
    <property type="molecule type" value="mRNA"/>
</dbReference>
<dbReference type="EMBL" id="AC018836">
    <property type="status" value="NOT_ANNOTATED_CDS"/>
    <property type="molecule type" value="Genomic_DNA"/>
</dbReference>
<dbReference type="EMBL" id="KF495709">
    <property type="status" value="NOT_ANNOTATED_CDS"/>
    <property type="molecule type" value="Genomic_DNA"/>
</dbReference>
<dbReference type="EMBL" id="AC069246">
    <property type="status" value="NOT_ANNOTATED_CDS"/>
    <property type="molecule type" value="Genomic_DNA"/>
</dbReference>
<dbReference type="EMBL" id="AC069271">
    <property type="status" value="NOT_ANNOTATED_CDS"/>
    <property type="molecule type" value="Genomic_DNA"/>
</dbReference>
<dbReference type="EMBL" id="KF457597">
    <property type="status" value="NOT_ANNOTATED_CDS"/>
    <property type="molecule type" value="Genomic_DNA"/>
</dbReference>
<dbReference type="EMBL" id="AB018306">
    <property type="protein sequence ID" value="BAA34483.2"/>
    <property type="molecule type" value="mRNA"/>
</dbReference>
<dbReference type="EMBL" id="BC010267">
    <property type="protein sequence ID" value="AAH10267.1"/>
    <property type="molecule type" value="mRNA"/>
</dbReference>
<dbReference type="CCDS" id="CCDS33703.1">
    <molecule id="Q6DN90-1"/>
</dbReference>
<dbReference type="CCDS" id="CCDS74902.1">
    <molecule id="Q6DN90-3"/>
</dbReference>
<dbReference type="RefSeq" id="NP_001127854.1">
    <molecule id="Q6DN90-3"/>
    <property type="nucleotide sequence ID" value="NM_001134382.3"/>
</dbReference>
<dbReference type="RefSeq" id="NP_001317548.1">
    <property type="nucleotide sequence ID" value="NM_001330619.1"/>
</dbReference>
<dbReference type="RefSeq" id="NP_055684.3">
    <molecule id="Q6DN90-1"/>
    <property type="nucleotide sequence ID" value="NM_014869.6"/>
</dbReference>
<dbReference type="RefSeq" id="XP_011532617.1">
    <property type="nucleotide sequence ID" value="XM_011534315.2"/>
</dbReference>
<dbReference type="PDB" id="3QWM">
    <property type="method" value="X-ray"/>
    <property type="resolution" value="2.39 A"/>
    <property type="chains" value="A=743-880"/>
</dbReference>
<dbReference type="PDB" id="4C0A">
    <property type="method" value="X-ray"/>
    <property type="resolution" value="3.30 A"/>
    <property type="chains" value="A/B/E/F=512-885"/>
</dbReference>
<dbReference type="PDB" id="5NLV">
    <property type="method" value="X-ray"/>
    <property type="resolution" value="2.40 A"/>
    <property type="chains" value="A=512-885"/>
</dbReference>
<dbReference type="PDB" id="5NLY">
    <property type="method" value="X-ray"/>
    <property type="resolution" value="2.00 A"/>
    <property type="chains" value="A/B=512-885"/>
</dbReference>
<dbReference type="PDB" id="6FNE">
    <property type="method" value="X-ray"/>
    <property type="resolution" value="2.50 A"/>
    <property type="chains" value="A/B=512-885"/>
</dbReference>
<dbReference type="PDB" id="7VMB">
    <property type="method" value="X-ray"/>
    <property type="resolution" value="2.00 A"/>
    <property type="chains" value="A=517-882, B=106-173"/>
</dbReference>
<dbReference type="PDBsum" id="3QWM"/>
<dbReference type="PDBsum" id="4C0A"/>
<dbReference type="PDBsum" id="5NLV"/>
<dbReference type="PDBsum" id="5NLY"/>
<dbReference type="PDBsum" id="6FNE"/>
<dbReference type="PDBsum" id="7VMB"/>
<dbReference type="SMR" id="Q6DN90"/>
<dbReference type="BioGRID" id="115250">
    <property type="interactions" value="124"/>
</dbReference>
<dbReference type="FunCoup" id="Q6DN90">
    <property type="interactions" value="2401"/>
</dbReference>
<dbReference type="IntAct" id="Q6DN90">
    <property type="interactions" value="99"/>
</dbReference>
<dbReference type="MINT" id="Q6DN90"/>
<dbReference type="STRING" id="9606.ENSP00000480301"/>
<dbReference type="GlyGen" id="Q6DN90">
    <property type="glycosylation" value="1 site, 1 O-linked glycan (1 site)"/>
</dbReference>
<dbReference type="iPTMnet" id="Q6DN90"/>
<dbReference type="PhosphoSitePlus" id="Q6DN90"/>
<dbReference type="SwissPalm" id="Q6DN90"/>
<dbReference type="BioMuta" id="IQSEC1"/>
<dbReference type="DMDM" id="74748429"/>
<dbReference type="jPOST" id="Q6DN90"/>
<dbReference type="MassIVE" id="Q6DN90"/>
<dbReference type="PaxDb" id="9606-ENSP00000480301"/>
<dbReference type="PeptideAtlas" id="Q6DN90"/>
<dbReference type="ProteomicsDB" id="66252">
    <molecule id="Q6DN90-1"/>
</dbReference>
<dbReference type="ProteomicsDB" id="66253">
    <molecule id="Q6DN90-2"/>
</dbReference>
<dbReference type="Pumba" id="Q6DN90"/>
<dbReference type="Antibodypedia" id="26313">
    <property type="antibodies" value="46 antibodies from 23 providers"/>
</dbReference>
<dbReference type="DNASU" id="9922"/>
<dbReference type="Ensembl" id="ENST00000273221.8">
    <molecule id="Q6DN90-1"/>
    <property type="protein sequence ID" value="ENSP00000273221.4"/>
    <property type="gene ID" value="ENSG00000144711.17"/>
</dbReference>
<dbReference type="Ensembl" id="ENST00000613206.2">
    <molecule id="Q6DN90-3"/>
    <property type="protein sequence ID" value="ENSP00000480301.1"/>
    <property type="gene ID" value="ENSG00000144711.17"/>
</dbReference>
<dbReference type="GeneID" id="9922"/>
<dbReference type="KEGG" id="hsa:9922"/>
<dbReference type="MANE-Select" id="ENST00000613206.2">
    <molecule id="Q6DN90-3"/>
    <property type="protein sequence ID" value="ENSP00000480301.1"/>
    <property type="RefSeq nucleotide sequence ID" value="NM_001134382.3"/>
    <property type="RefSeq protein sequence ID" value="NP_001127854.1"/>
</dbReference>
<dbReference type="UCSC" id="uc003bxt.4">
    <molecule id="Q6DN90-1"/>
    <property type="organism name" value="human"/>
</dbReference>
<dbReference type="AGR" id="HGNC:29112"/>
<dbReference type="CTD" id="9922"/>
<dbReference type="DisGeNET" id="9922"/>
<dbReference type="GeneCards" id="IQSEC1"/>
<dbReference type="HGNC" id="HGNC:29112">
    <property type="gene designation" value="IQSEC1"/>
</dbReference>
<dbReference type="HPA" id="ENSG00000144711">
    <property type="expression patterns" value="Low tissue specificity"/>
</dbReference>
<dbReference type="MalaCards" id="IQSEC1"/>
<dbReference type="MIM" id="610166">
    <property type="type" value="gene"/>
</dbReference>
<dbReference type="MIM" id="618687">
    <property type="type" value="phenotype"/>
</dbReference>
<dbReference type="neXtProt" id="NX_Q6DN90"/>
<dbReference type="OpenTargets" id="ENSG00000144711"/>
<dbReference type="Orphanet" id="88616">
    <property type="disease" value="Autosomal recessive non-syndromic intellectual disability"/>
</dbReference>
<dbReference type="PharmGKB" id="PA128394566"/>
<dbReference type="VEuPathDB" id="HostDB:ENSG00000144711"/>
<dbReference type="eggNOG" id="KOG0931">
    <property type="taxonomic scope" value="Eukaryota"/>
</dbReference>
<dbReference type="GeneTree" id="ENSGT00940000156915"/>
<dbReference type="InParanoid" id="Q6DN90"/>
<dbReference type="OMA" id="RYCICNS"/>
<dbReference type="OrthoDB" id="430364at2759"/>
<dbReference type="PAN-GO" id="Q6DN90">
    <property type="GO annotations" value="1 GO annotation based on evolutionary models"/>
</dbReference>
<dbReference type="PhylomeDB" id="Q6DN90"/>
<dbReference type="TreeFam" id="TF323811"/>
<dbReference type="PathwayCommons" id="Q6DN90"/>
<dbReference type="SignaLink" id="Q6DN90"/>
<dbReference type="BioGRID-ORCS" id="9922">
    <property type="hits" value="13 hits in 1161 CRISPR screens"/>
</dbReference>
<dbReference type="CD-CODE" id="FB4E32DD">
    <property type="entry name" value="Presynaptic clusters and postsynaptic densities"/>
</dbReference>
<dbReference type="ChiTaRS" id="IQSEC1">
    <property type="organism name" value="human"/>
</dbReference>
<dbReference type="EvolutionaryTrace" id="Q6DN90"/>
<dbReference type="GeneWiki" id="IQSEC1"/>
<dbReference type="GenomeRNAi" id="9922"/>
<dbReference type="Pharos" id="Q6DN90">
    <property type="development level" value="Tbio"/>
</dbReference>
<dbReference type="PRO" id="PR:Q6DN90"/>
<dbReference type="Proteomes" id="UP000005640">
    <property type="component" value="Chromosome 3"/>
</dbReference>
<dbReference type="RNAct" id="Q6DN90">
    <property type="molecule type" value="protein"/>
</dbReference>
<dbReference type="Bgee" id="ENSG00000144711">
    <property type="expression patterns" value="Expressed in Brodmann (1909) area 46 and 194 other cell types or tissues"/>
</dbReference>
<dbReference type="ExpressionAtlas" id="Q6DN90">
    <property type="expression patterns" value="baseline and differential"/>
</dbReference>
<dbReference type="GO" id="GO:0005813">
    <property type="term" value="C:centrosome"/>
    <property type="evidence" value="ECO:0000314"/>
    <property type="project" value="HPA"/>
</dbReference>
<dbReference type="GO" id="GO:0005829">
    <property type="term" value="C:cytosol"/>
    <property type="evidence" value="ECO:0000314"/>
    <property type="project" value="HPA"/>
</dbReference>
<dbReference type="GO" id="GO:0043231">
    <property type="term" value="C:intracellular membrane-bounded organelle"/>
    <property type="evidence" value="ECO:0000314"/>
    <property type="project" value="HPA"/>
</dbReference>
<dbReference type="GO" id="GO:0016020">
    <property type="term" value="C:membrane"/>
    <property type="evidence" value="ECO:0007005"/>
    <property type="project" value="UniProtKB"/>
</dbReference>
<dbReference type="GO" id="GO:0005654">
    <property type="term" value="C:nucleoplasm"/>
    <property type="evidence" value="ECO:0000314"/>
    <property type="project" value="HPA"/>
</dbReference>
<dbReference type="GO" id="GO:0014069">
    <property type="term" value="C:postsynaptic density"/>
    <property type="evidence" value="ECO:0007669"/>
    <property type="project" value="UniProtKB-SubCell"/>
</dbReference>
<dbReference type="GO" id="GO:0008021">
    <property type="term" value="C:synaptic vesicle"/>
    <property type="evidence" value="ECO:0007669"/>
    <property type="project" value="UniProtKB-SubCell"/>
</dbReference>
<dbReference type="GO" id="GO:0005085">
    <property type="term" value="F:guanyl-nucleotide exchange factor activity"/>
    <property type="evidence" value="ECO:0007669"/>
    <property type="project" value="UniProtKB-KW"/>
</dbReference>
<dbReference type="GO" id="GO:0008289">
    <property type="term" value="F:lipid binding"/>
    <property type="evidence" value="ECO:0007669"/>
    <property type="project" value="UniProtKB-KW"/>
</dbReference>
<dbReference type="GO" id="GO:0030036">
    <property type="term" value="P:actin cytoskeleton organization"/>
    <property type="evidence" value="ECO:0000318"/>
    <property type="project" value="GO_Central"/>
</dbReference>
<dbReference type="GO" id="GO:0060996">
    <property type="term" value="P:dendritic spine development"/>
    <property type="evidence" value="ECO:0000250"/>
    <property type="project" value="UniProtKB"/>
</dbReference>
<dbReference type="GO" id="GO:0120183">
    <property type="term" value="P:positive regulation of focal adhesion disassembly"/>
    <property type="evidence" value="ECO:0000250"/>
    <property type="project" value="ARUK-UCL"/>
</dbReference>
<dbReference type="GO" id="GO:0051549">
    <property type="term" value="P:positive regulation of keratinocyte migration"/>
    <property type="evidence" value="ECO:0000250"/>
    <property type="project" value="ARUK-UCL"/>
</dbReference>
<dbReference type="GO" id="GO:0032012">
    <property type="term" value="P:regulation of ARF protein signal transduction"/>
    <property type="evidence" value="ECO:0007669"/>
    <property type="project" value="InterPro"/>
</dbReference>
<dbReference type="CDD" id="cd13318">
    <property type="entry name" value="PH_IQSEC"/>
    <property type="match status" value="1"/>
</dbReference>
<dbReference type="CDD" id="cd00171">
    <property type="entry name" value="Sec7"/>
    <property type="match status" value="1"/>
</dbReference>
<dbReference type="FunFam" id="1.10.1000.11:FF:000001">
    <property type="entry name" value="IQ motif and SEC7 domain-containing protein 1"/>
    <property type="match status" value="1"/>
</dbReference>
<dbReference type="FunFam" id="1.10.220.20:FF:000001">
    <property type="entry name" value="IQ motif and SEC7 domain-containing protein 1"/>
    <property type="match status" value="1"/>
</dbReference>
<dbReference type="FunFam" id="2.30.29.30:FF:000004">
    <property type="entry name" value="IQ motif and SEC7 domain-containing protein 1"/>
    <property type="match status" value="1"/>
</dbReference>
<dbReference type="Gene3D" id="1.10.220.20">
    <property type="match status" value="1"/>
</dbReference>
<dbReference type="Gene3D" id="1.10.1000.11">
    <property type="entry name" value="Arf Nucleotide-binding Site Opener,domain 2"/>
    <property type="match status" value="1"/>
</dbReference>
<dbReference type="Gene3D" id="2.30.29.30">
    <property type="entry name" value="Pleckstrin-homology domain (PH domain)/Phosphotyrosine-binding domain (PTB)"/>
    <property type="match status" value="1"/>
</dbReference>
<dbReference type="InterPro" id="IPR033742">
    <property type="entry name" value="IQSEC_PH"/>
</dbReference>
<dbReference type="InterPro" id="IPR011993">
    <property type="entry name" value="PH-like_dom_sf"/>
</dbReference>
<dbReference type="InterPro" id="IPR001849">
    <property type="entry name" value="PH_domain"/>
</dbReference>
<dbReference type="InterPro" id="IPR023394">
    <property type="entry name" value="Sec7_C_sf"/>
</dbReference>
<dbReference type="InterPro" id="IPR000904">
    <property type="entry name" value="Sec7_dom"/>
</dbReference>
<dbReference type="InterPro" id="IPR035999">
    <property type="entry name" value="Sec7_dom_sf"/>
</dbReference>
<dbReference type="PANTHER" id="PTHR10663">
    <property type="entry name" value="GUANYL-NUCLEOTIDE EXCHANGE FACTOR"/>
    <property type="match status" value="1"/>
</dbReference>
<dbReference type="PANTHER" id="PTHR10663:SF327">
    <property type="entry name" value="IQ MOTIF AND SEC7 DOMAIN-CONTAINING PROTEIN 1"/>
    <property type="match status" value="1"/>
</dbReference>
<dbReference type="Pfam" id="PF16453">
    <property type="entry name" value="IQ_SEC7_PH"/>
    <property type="match status" value="1"/>
</dbReference>
<dbReference type="Pfam" id="PF01369">
    <property type="entry name" value="Sec7"/>
    <property type="match status" value="1"/>
</dbReference>
<dbReference type="SMART" id="SM00233">
    <property type="entry name" value="PH"/>
    <property type="match status" value="1"/>
</dbReference>
<dbReference type="SMART" id="SM00222">
    <property type="entry name" value="Sec7"/>
    <property type="match status" value="1"/>
</dbReference>
<dbReference type="SUPFAM" id="SSF50729">
    <property type="entry name" value="PH domain-like"/>
    <property type="match status" value="1"/>
</dbReference>
<dbReference type="SUPFAM" id="SSF48425">
    <property type="entry name" value="Sec7 domain"/>
    <property type="match status" value="1"/>
</dbReference>
<dbReference type="PROSITE" id="PS50096">
    <property type="entry name" value="IQ"/>
    <property type="match status" value="1"/>
</dbReference>
<dbReference type="PROSITE" id="PS50190">
    <property type="entry name" value="SEC7"/>
    <property type="match status" value="1"/>
</dbReference>
<name>IQEC1_HUMAN</name>
<sequence>MWCLHCNSERTQSLLELELDSGVEGEAPSSETGTSLDSPSAYPQGPLVPGSSLSPDHYEHTSVGAYGLYSGPPGQQQRTRRPKLQHSTSILRKQAEEEAIKRSRSLSESYELSSDLQDKQVEMLERKYGGRLVTRHAARTIQTAFRQYQMNKNFERLRSSMSENRMSRRIVLSNMRMQFSFEGPEKVHSSYFEGKQVSVTNDGSQLGALVSPECGDLSEPTTLKSPAPSSDFADAITELEDAFSRQVKSLAESIDDALNCRSLHTEEAPALDAARARDTEPQTALHGMDHRKLDEMTASYSDVTLYIDEEELSPPLPLSQAGDRPSSTESDLRLRAGGAAPDYWALAHKEDKADTDTSCRSTPSLERQEQRLRVEHLPLLTIEPPSDSSVDLSDRSERGSLKRQSAYERSLGGQQGSPKHGPHSGAPKSLPREEPELRPRPPRPLDSHLAINGSANRQSKSESDYSDGDNDSINSTSNSNDTINCSSESSSRDSLREQTLSKQTYHKEARNSWDSPAFSNDVIRKRHYRIGLNLFNKKPEKGVQYLIERGFVPDTPVGVAHFLLQRKGLSRQMIGEFLGNRQKQFNRDVLDCVVDEMDFSTMELDEALRKFQAHIRVQGEAQKVERLIEAFSQRYCICNPGVVRQFRNPDTIFILAFAIILLNTDMYSPNVKPERKMKLEDFIKNLRGVDDGEDIPREMLMGIYERIRKRELKTNEDHVSQVQKVEKLIVGKKPIGSLHPGLGCVLSLPHRRLVCYCRLFEVPDPNKPQKLGLHQREIFLFNDLLVVTKIFQKKKNSVTYSFRQSFSLYGMQVLLFENQYYPNGIRLTSSVPGADIKVLINFNAPNPQDRKKFTDDLRESIAEVQEMEKHRIESELEKQKGVVRPSMSQCSSLKKESGNGTLSRACLDDSYASGEGLKRSALSSSLRDLSEAGKRGRRSSAGSLESNVEFQPFEPLQPSVLCS</sequence>